<proteinExistence type="evidence at transcript level"/>
<organism>
    <name type="scientific">Dictyostelium discoideum</name>
    <name type="common">Social amoeba</name>
    <dbReference type="NCBI Taxonomy" id="44689"/>
    <lineage>
        <taxon>Eukaryota</taxon>
        <taxon>Amoebozoa</taxon>
        <taxon>Evosea</taxon>
        <taxon>Eumycetozoa</taxon>
        <taxon>Dictyostelia</taxon>
        <taxon>Dictyosteliales</taxon>
        <taxon>Dictyosteliaceae</taxon>
        <taxon>Dictyostelium</taxon>
    </lineage>
</organism>
<accession>P54675</accession>
<accession>Q553Z1</accession>
<accession>Q869X9</accession>
<reference key="1">
    <citation type="journal article" date="2002" name="Nature">
        <title>Sequence and analysis of chromosome 2 of Dictyostelium discoideum.</title>
        <authorList>
            <person name="Gloeckner G."/>
            <person name="Eichinger L."/>
            <person name="Szafranski K."/>
            <person name="Pachebat J.A."/>
            <person name="Bankier A.T."/>
            <person name="Dear P.H."/>
            <person name="Lehmann R."/>
            <person name="Baumgart C."/>
            <person name="Parra G."/>
            <person name="Abril J.F."/>
            <person name="Guigo R."/>
            <person name="Kumpf K."/>
            <person name="Tunggal B."/>
            <person name="Cox E.C."/>
            <person name="Quail M.A."/>
            <person name="Platzer M."/>
            <person name="Rosenthal A."/>
            <person name="Noegel A.A."/>
        </authorList>
    </citation>
    <scope>NUCLEOTIDE SEQUENCE [LARGE SCALE GENOMIC DNA]</scope>
    <source>
        <strain>AX4</strain>
    </source>
</reference>
<reference key="2">
    <citation type="journal article" date="2005" name="Nature">
        <title>The genome of the social amoeba Dictyostelium discoideum.</title>
        <authorList>
            <person name="Eichinger L."/>
            <person name="Pachebat J.A."/>
            <person name="Gloeckner G."/>
            <person name="Rajandream M.A."/>
            <person name="Sucgang R."/>
            <person name="Berriman M."/>
            <person name="Song J."/>
            <person name="Olsen R."/>
            <person name="Szafranski K."/>
            <person name="Xu Q."/>
            <person name="Tunggal B."/>
            <person name="Kummerfeld S."/>
            <person name="Madera M."/>
            <person name="Konfortov B.A."/>
            <person name="Rivero F."/>
            <person name="Bankier A.T."/>
            <person name="Lehmann R."/>
            <person name="Hamlin N."/>
            <person name="Davies R."/>
            <person name="Gaudet P."/>
            <person name="Fey P."/>
            <person name="Pilcher K."/>
            <person name="Chen G."/>
            <person name="Saunders D."/>
            <person name="Sodergren E.J."/>
            <person name="Davis P."/>
            <person name="Kerhornou A."/>
            <person name="Nie X."/>
            <person name="Hall N."/>
            <person name="Anjard C."/>
            <person name="Hemphill L."/>
            <person name="Bason N."/>
            <person name="Farbrother P."/>
            <person name="Desany B."/>
            <person name="Just E."/>
            <person name="Morio T."/>
            <person name="Rost R."/>
            <person name="Churcher C.M."/>
            <person name="Cooper J."/>
            <person name="Haydock S."/>
            <person name="van Driessche N."/>
            <person name="Cronin A."/>
            <person name="Goodhead I."/>
            <person name="Muzny D.M."/>
            <person name="Mourier T."/>
            <person name="Pain A."/>
            <person name="Lu M."/>
            <person name="Harper D."/>
            <person name="Lindsay R."/>
            <person name="Hauser H."/>
            <person name="James K.D."/>
            <person name="Quiles M."/>
            <person name="Madan Babu M."/>
            <person name="Saito T."/>
            <person name="Buchrieser C."/>
            <person name="Wardroper A."/>
            <person name="Felder M."/>
            <person name="Thangavelu M."/>
            <person name="Johnson D."/>
            <person name="Knights A."/>
            <person name="Loulseged H."/>
            <person name="Mungall K.L."/>
            <person name="Oliver K."/>
            <person name="Price C."/>
            <person name="Quail M.A."/>
            <person name="Urushihara H."/>
            <person name="Hernandez J."/>
            <person name="Rabbinowitsch E."/>
            <person name="Steffen D."/>
            <person name="Sanders M."/>
            <person name="Ma J."/>
            <person name="Kohara Y."/>
            <person name="Sharp S."/>
            <person name="Simmonds M.N."/>
            <person name="Spiegler S."/>
            <person name="Tivey A."/>
            <person name="Sugano S."/>
            <person name="White B."/>
            <person name="Walker D."/>
            <person name="Woodward J.R."/>
            <person name="Winckler T."/>
            <person name="Tanaka Y."/>
            <person name="Shaulsky G."/>
            <person name="Schleicher M."/>
            <person name="Weinstock G.M."/>
            <person name="Rosenthal A."/>
            <person name="Cox E.C."/>
            <person name="Chisholm R.L."/>
            <person name="Gibbs R.A."/>
            <person name="Loomis W.F."/>
            <person name="Platzer M."/>
            <person name="Kay R.R."/>
            <person name="Williams J.G."/>
            <person name="Dear P.H."/>
            <person name="Noegel A.A."/>
            <person name="Barrell B.G."/>
            <person name="Kuspa A."/>
        </authorList>
    </citation>
    <scope>NUCLEOTIDE SEQUENCE [LARGE SCALE GENOMIC DNA]</scope>
    <source>
        <strain>AX4</strain>
    </source>
</reference>
<reference key="3">
    <citation type="journal article" date="1995" name="Mol. Cell. Biol.">
        <title>A phosphatidylinositol (PI) kinase gene family in Dictyostelium discoideum: biological roles of putative mammalian p110 and yeast Vps34p PI 3-kinase homologs during growth and development.</title>
        <authorList>
            <person name="Zhou K."/>
            <person name="Takegawa K."/>
            <person name="Emr S.D."/>
            <person name="Firtel R.A."/>
        </authorList>
    </citation>
    <scope>NUCLEOTIDE SEQUENCE [MRNA] OF 113-1697</scope>
    <source>
        <strain>AX3</strain>
    </source>
</reference>
<gene>
    <name type="primary">pikC</name>
    <name type="synonym">pik3</name>
    <name type="ORF">DDB_G0275011</name>
</gene>
<keyword id="KW-0067">ATP-binding</keyword>
<keyword id="KW-0418">Kinase</keyword>
<keyword id="KW-0547">Nucleotide-binding</keyword>
<keyword id="KW-1185">Reference proteome</keyword>
<keyword id="KW-0677">Repeat</keyword>
<keyword id="KW-0808">Transferase</keyword>
<feature type="chain" id="PRO_0000088824" description="Phosphatidylinositol 3-kinase 3">
    <location>
        <begin position="1"/>
        <end position="1697"/>
    </location>
</feature>
<feature type="domain" description="PI3K-RBD" evidence="3">
    <location>
        <begin position="737"/>
        <end position="823"/>
    </location>
</feature>
<feature type="domain" description="C2 PI3K-type" evidence="4">
    <location>
        <begin position="888"/>
        <end position="1036"/>
    </location>
</feature>
<feature type="domain" description="PIK helical" evidence="2">
    <location>
        <begin position="1060"/>
        <end position="1238"/>
    </location>
</feature>
<feature type="domain" description="PI3K/PI4K catalytic" evidence="1">
    <location>
        <begin position="1304"/>
        <end position="1581"/>
    </location>
</feature>
<feature type="repeat" description="1">
    <location>
        <begin position="1622"/>
        <end position="1626"/>
    </location>
</feature>
<feature type="repeat" description="2">
    <location>
        <begin position="1627"/>
        <end position="1631"/>
    </location>
</feature>
<feature type="repeat" description="3">
    <location>
        <begin position="1632"/>
        <end position="1636"/>
    </location>
</feature>
<feature type="repeat" description="4">
    <location>
        <begin position="1642"/>
        <end position="1646"/>
    </location>
</feature>
<feature type="repeat" description="5">
    <location>
        <begin position="1647"/>
        <end position="1651"/>
    </location>
</feature>
<feature type="region of interest" description="Disordered" evidence="5">
    <location>
        <begin position="57"/>
        <end position="91"/>
    </location>
</feature>
<feature type="region of interest" description="Disordered" evidence="5">
    <location>
        <begin position="169"/>
        <end position="229"/>
    </location>
</feature>
<feature type="region of interest" description="Disordered" evidence="5">
    <location>
        <begin position="244"/>
        <end position="279"/>
    </location>
</feature>
<feature type="region of interest" description="Disordered" evidence="5">
    <location>
        <begin position="310"/>
        <end position="376"/>
    </location>
</feature>
<feature type="region of interest" description="Disordered" evidence="5">
    <location>
        <begin position="398"/>
        <end position="428"/>
    </location>
</feature>
<feature type="region of interest" description="Disordered" evidence="5">
    <location>
        <begin position="440"/>
        <end position="504"/>
    </location>
</feature>
<feature type="region of interest" description="G-loop" evidence="1">
    <location>
        <begin position="1310"/>
        <end position="1316"/>
    </location>
</feature>
<feature type="region of interest" description="Catalytic loop" evidence="1">
    <location>
        <begin position="1447"/>
        <end position="1455"/>
    </location>
</feature>
<feature type="region of interest" description="Activation loop" evidence="1">
    <location>
        <begin position="1466"/>
        <end position="1492"/>
    </location>
</feature>
<feature type="region of interest" description="Disordered" evidence="5">
    <location>
        <begin position="1609"/>
        <end position="1697"/>
    </location>
</feature>
<feature type="region of interest" description="5 X 5 AA approximate repeats">
    <location>
        <begin position="1622"/>
        <end position="1651"/>
    </location>
</feature>
<feature type="region of interest" description="7 X 2 AA tandem repeats of K-E">
    <location>
        <begin position="1659"/>
        <end position="1672"/>
    </location>
</feature>
<feature type="compositionally biased region" description="Low complexity" evidence="5">
    <location>
        <begin position="60"/>
        <end position="87"/>
    </location>
</feature>
<feature type="compositionally biased region" description="Low complexity" evidence="5">
    <location>
        <begin position="170"/>
        <end position="196"/>
    </location>
</feature>
<feature type="compositionally biased region" description="Low complexity" evidence="5">
    <location>
        <begin position="212"/>
        <end position="222"/>
    </location>
</feature>
<feature type="compositionally biased region" description="Low complexity" evidence="5">
    <location>
        <begin position="312"/>
        <end position="374"/>
    </location>
</feature>
<feature type="compositionally biased region" description="Low complexity" evidence="5">
    <location>
        <begin position="398"/>
        <end position="408"/>
    </location>
</feature>
<feature type="compositionally biased region" description="Polar residues" evidence="5">
    <location>
        <begin position="409"/>
        <end position="428"/>
    </location>
</feature>
<feature type="compositionally biased region" description="Polar residues" evidence="5">
    <location>
        <begin position="444"/>
        <end position="456"/>
    </location>
</feature>
<feature type="compositionally biased region" description="Low complexity" evidence="5">
    <location>
        <begin position="457"/>
        <end position="503"/>
    </location>
</feature>
<feature type="compositionally biased region" description="Low complexity" evidence="5">
    <location>
        <begin position="1609"/>
        <end position="1625"/>
    </location>
</feature>
<feature type="compositionally biased region" description="Basic and acidic residues" evidence="5">
    <location>
        <begin position="1626"/>
        <end position="1681"/>
    </location>
</feature>
<feature type="compositionally biased region" description="Basic and acidic residues" evidence="5">
    <location>
        <begin position="1688"/>
        <end position="1697"/>
    </location>
</feature>
<feature type="sequence conflict" description="In Ref. 3; AAA85723." evidence="6" ref="3">
    <original>A</original>
    <variation>T</variation>
    <location>
        <position position="1159"/>
    </location>
</feature>
<feature type="sequence conflict" description="In Ref. 3; AAA85723." evidence="6" ref="3">
    <original>M</original>
    <variation>L</variation>
    <location>
        <position position="1175"/>
    </location>
</feature>
<sequence length="1697" mass="192942">MRQIVTGVIHQTTQSQQIPNVINSNQIQFSNEPMVVGSIEDFDIDSEVPPLAINLQRSINNNNNNNNNNNNNNNNNNNNNNNNNNNNTQPCTTVFLDRDSCVNVKATIDLLKEQLEFTIKDLIDFKENYDKLESTEQFKQWSNLIKNIKENSLNNSNIYLTIPTTQNLINNNNNNNNNNNNNNNNNNNNNNNNNNNVIIPSASTENKEENDNNNSNNNNNINLSPDSSITKDINITENKITEIKTTETKETSTGTSPLEKSPSKGFIISPKKPEEENEIEGETINNIAITNYTQGPSMLTLMKKKLENIKKNNNNNNNNGNGNNNSNNNNSNSNNNNNGISPSSSPPSHLNGNNNNNNSNNTNSNNTTNATTNSVGFSITMTNSNSLSVSKRMNKFKSWTSSKPTSSSIGFASSPQNNGKPLNISGSSRFFTSRQDSKIDLLKSPSSSPPTQSDIFNENNNNNNNNNNNNNNNNNNNNNNNNNNNNNNNNEELINNNNNNNNDENYKIEETEESLKELLEKEKLENEEREKILKERNEIDNLKKKNHLSKGYFMRACNASNDDGLEEEDIPLQDEHWETNVIVLLPCRHHVKVPGSSSSSIDSIRQLAWASGKMQGHLNLEKDEKFFTLRWCNKDVVFDQDTPLGHLIQYNLNYNNPTQKPTNIKLELVLEDELCKERLVDLQSLEINNGRPSIWKSHIDDVLSFNRKLRELAMLAKPQSNVPAARLTPYPPPKTIPEFFVIRVHLFKNQTKSLRCANNHTAFSLMTILSEKLKNTTPFDPTQYRFLITGINQYVDPNVPLLSVEYIVEKIKRKGEIDLTMVELLSLGLIIQQQQQQQQQQQQQQQQQQIENIDDENILKLNNGILNVLSKIEKPIREKDNCISSLTVTENLQVRLLHAHEIFASKASEIIGTDSPSIQLFIEAAVYFGGELLATQSSKLVSFQDTVVWNEWVNIPLAVSNIPNGARMCLGLNARYRGDIFNIGWVGHRLFDSKGILNTFAPFSLLLWPGKINPIGTCVDNLESKDQAIIIAFEFKDYVVPKTIHYEDDLIELISKDENGNELPVVTMEEMDRVEQIILQDPLYSLNKEERLLIWKSRYFCHTKPQALSKLLQSVEWTNYKQVGEAFQLLKIWPTLSAVDALELLDPKFADCVEIREYAVKCLDQMSDYELEIYMLQLVQAIKHDVFHNSVLSLFLIGRVWQNMQVLGHPFFWHLRADIDNQEVCERFRVLSSGFLRYAPTQLMESFKREITTLRILENLAKRVKEVPYEKRKQYVENNLREEQSFPTELFVPFDPSIRILNIIPEKCKSMDSAKVPLWVTFKNADPFAPPLQMIAKTGDDLRQDILTLQLLRLMDHMWKSQDLDLHMTIYRCIATGMGTGLIEVVPNSETAARIQAGAGGVSGAFKQTPIANWLKNHNQTENSYQKAVSKFTLSCAGYCVATYVLGIGDRHNDNIMVDIHGHLFHIDFGHFLGNFKTFAGFQREKAPFVLTPDFVYVIGGKDSPNFAFFVDICCKAFNIIRSNAHVFINMFELMLSTGIPELRSENDIVYLRDKFRLDLTDAEASEYFKKLIHESIGTLTTTINFAIHIMAHRKNLVSGNSAPKIGSASSLNLNKNKPSSQSKLDLSRSDLSRSDSSRSDSSRLDLSRSDKKNNKDNKEKEKEKEKEKEKENNDNNDKDNNNNSNNDTEKENSIDK</sequence>
<evidence type="ECO:0000255" key="1">
    <source>
        <dbReference type="PROSITE-ProRule" id="PRU00269"/>
    </source>
</evidence>
<evidence type="ECO:0000255" key="2">
    <source>
        <dbReference type="PROSITE-ProRule" id="PRU00878"/>
    </source>
</evidence>
<evidence type="ECO:0000255" key="3">
    <source>
        <dbReference type="PROSITE-ProRule" id="PRU00879"/>
    </source>
</evidence>
<evidence type="ECO:0000255" key="4">
    <source>
        <dbReference type="PROSITE-ProRule" id="PRU00880"/>
    </source>
</evidence>
<evidence type="ECO:0000256" key="5">
    <source>
        <dbReference type="SAM" id="MobiDB-lite"/>
    </source>
</evidence>
<evidence type="ECO:0000305" key="6"/>
<name>PI3K3_DICDI</name>
<dbReference type="EC" id="2.7.1.137"/>
<dbReference type="EMBL" id="AAFI02000013">
    <property type="protein sequence ID" value="EAL69786.1"/>
    <property type="molecule type" value="Genomic_DNA"/>
</dbReference>
<dbReference type="EMBL" id="U23478">
    <property type="protein sequence ID" value="AAA85723.1"/>
    <property type="molecule type" value="mRNA"/>
</dbReference>
<dbReference type="PIR" id="T18274">
    <property type="entry name" value="T18274"/>
</dbReference>
<dbReference type="RefSeq" id="XP_643820.1">
    <property type="nucleotide sequence ID" value="XM_638728.1"/>
</dbReference>
<dbReference type="SMR" id="P54675"/>
<dbReference type="FunCoup" id="P54675">
    <property type="interactions" value="38"/>
</dbReference>
<dbReference type="STRING" id="44689.P54675"/>
<dbReference type="PaxDb" id="44689-DDB0185203"/>
<dbReference type="EnsemblProtists" id="EAL69786">
    <property type="protein sequence ID" value="EAL69786"/>
    <property type="gene ID" value="DDB_G0275011"/>
</dbReference>
<dbReference type="GeneID" id="8619867"/>
<dbReference type="KEGG" id="ddi:DDB_G0275011"/>
<dbReference type="dictyBase" id="DDB_G0275011">
    <property type="gene designation" value="pikC"/>
</dbReference>
<dbReference type="VEuPathDB" id="AmoebaDB:DDB_G0275011"/>
<dbReference type="eggNOG" id="KOG0905">
    <property type="taxonomic scope" value="Eukaryota"/>
</dbReference>
<dbReference type="HOGENOM" id="CLU_240995_0_0_1"/>
<dbReference type="InParanoid" id="P54675"/>
<dbReference type="OMA" id="LHAHEIF"/>
<dbReference type="PhylomeDB" id="P54675"/>
<dbReference type="BRENDA" id="2.7.1.137">
    <property type="organism ID" value="1939"/>
</dbReference>
<dbReference type="Reactome" id="R-DDI-114604">
    <property type="pathway name" value="GPVI-mediated activation cascade"/>
</dbReference>
<dbReference type="Reactome" id="R-DDI-1660499">
    <property type="pathway name" value="Synthesis of PIPs at the plasma membrane"/>
</dbReference>
<dbReference type="Reactome" id="R-DDI-1660514">
    <property type="pathway name" value="Synthesis of PIPs at the Golgi membrane"/>
</dbReference>
<dbReference type="Reactome" id="R-DDI-1660516">
    <property type="pathway name" value="Synthesis of PIPs at the early endosome membrane"/>
</dbReference>
<dbReference type="Reactome" id="R-DDI-1660517">
    <property type="pathway name" value="Synthesis of PIPs at the late endosome membrane"/>
</dbReference>
<dbReference type="Reactome" id="R-DDI-392451">
    <property type="pathway name" value="G beta:gamma signalling through PI3Kgamma"/>
</dbReference>
<dbReference type="Reactome" id="R-DDI-8856828">
    <property type="pathway name" value="Clathrin-mediated endocytosis"/>
</dbReference>
<dbReference type="PRO" id="PR:P54675"/>
<dbReference type="Proteomes" id="UP000002195">
    <property type="component" value="Chromosome 2"/>
</dbReference>
<dbReference type="GO" id="GO:0005737">
    <property type="term" value="C:cytoplasm"/>
    <property type="evidence" value="ECO:0000318"/>
    <property type="project" value="GO_Central"/>
</dbReference>
<dbReference type="GO" id="GO:0005886">
    <property type="term" value="C:plasma membrane"/>
    <property type="evidence" value="ECO:0000318"/>
    <property type="project" value="GO_Central"/>
</dbReference>
<dbReference type="GO" id="GO:0016303">
    <property type="term" value="F:1-phosphatidylinositol-3-kinase activity"/>
    <property type="evidence" value="ECO:0000318"/>
    <property type="project" value="GO_Central"/>
</dbReference>
<dbReference type="GO" id="GO:0035005">
    <property type="term" value="F:1-phosphatidylinositol-4-phosphate 3-kinase activity"/>
    <property type="evidence" value="ECO:0000318"/>
    <property type="project" value="GO_Central"/>
</dbReference>
<dbReference type="GO" id="GO:0005524">
    <property type="term" value="F:ATP binding"/>
    <property type="evidence" value="ECO:0007669"/>
    <property type="project" value="UniProtKB-KW"/>
</dbReference>
<dbReference type="GO" id="GO:0031267">
    <property type="term" value="F:small GTPase binding"/>
    <property type="evidence" value="ECO:0000353"/>
    <property type="project" value="dictyBase"/>
</dbReference>
<dbReference type="GO" id="GO:0032060">
    <property type="term" value="P:bleb assembly"/>
    <property type="evidence" value="ECO:0000316"/>
    <property type="project" value="dictyBase"/>
</dbReference>
<dbReference type="GO" id="GO:0016477">
    <property type="term" value="P:cell migration"/>
    <property type="evidence" value="ECO:0000318"/>
    <property type="project" value="GO_Central"/>
</dbReference>
<dbReference type="GO" id="GO:0048870">
    <property type="term" value="P:cell motility"/>
    <property type="evidence" value="ECO:0000316"/>
    <property type="project" value="dictyBase"/>
</dbReference>
<dbReference type="GO" id="GO:0043491">
    <property type="term" value="P:phosphatidylinositol 3-kinase/protein kinase B signal transduction"/>
    <property type="evidence" value="ECO:0000318"/>
    <property type="project" value="GO_Central"/>
</dbReference>
<dbReference type="GO" id="GO:0036092">
    <property type="term" value="P:phosphatidylinositol-3-phosphate biosynthetic process"/>
    <property type="evidence" value="ECO:0000318"/>
    <property type="project" value="GO_Central"/>
</dbReference>
<dbReference type="GO" id="GO:0048015">
    <property type="term" value="P:phosphatidylinositol-mediated signaling"/>
    <property type="evidence" value="ECO:0000318"/>
    <property type="project" value="GO_Central"/>
</dbReference>
<dbReference type="GO" id="GO:0050920">
    <property type="term" value="P:regulation of chemotaxis"/>
    <property type="evidence" value="ECO:0000316"/>
    <property type="project" value="dictyBase"/>
</dbReference>
<dbReference type="GO" id="GO:0009617">
    <property type="term" value="P:response to bacterium"/>
    <property type="evidence" value="ECO:0000315"/>
    <property type="project" value="dictyBase"/>
</dbReference>
<dbReference type="CDD" id="cd08380">
    <property type="entry name" value="C2_PI3K_like"/>
    <property type="match status" value="1"/>
</dbReference>
<dbReference type="CDD" id="cd00872">
    <property type="entry name" value="PI3Ka_I"/>
    <property type="match status" value="1"/>
</dbReference>
<dbReference type="CDD" id="cd00891">
    <property type="entry name" value="PI3Kc"/>
    <property type="match status" value="1"/>
</dbReference>
<dbReference type="FunFam" id="3.10.20.770:FF:000013">
    <property type="entry name" value="Phosphatidylinositol 3-kinase 3"/>
    <property type="match status" value="1"/>
</dbReference>
<dbReference type="FunFam" id="1.10.1070.11:FF:000001">
    <property type="entry name" value="Phosphatidylinositol 4,5-bisphosphate 3-kinase catalytic subunit"/>
    <property type="match status" value="1"/>
</dbReference>
<dbReference type="FunFam" id="3.30.1010.10:FF:000008">
    <property type="entry name" value="Phosphatidylinositol 4,5-bisphosphate 3-kinase catalytic subunit gamma"/>
    <property type="match status" value="1"/>
</dbReference>
<dbReference type="Gene3D" id="3.10.20.770">
    <property type="match status" value="1"/>
</dbReference>
<dbReference type="Gene3D" id="2.60.40.150">
    <property type="entry name" value="C2 domain"/>
    <property type="match status" value="1"/>
</dbReference>
<dbReference type="Gene3D" id="1.10.1070.11">
    <property type="entry name" value="Phosphatidylinositol 3-/4-kinase, catalytic domain"/>
    <property type="match status" value="1"/>
</dbReference>
<dbReference type="Gene3D" id="3.30.1010.10">
    <property type="entry name" value="Phosphatidylinositol 3-kinase Catalytic Subunit, Chain A, domain 4"/>
    <property type="match status" value="1"/>
</dbReference>
<dbReference type="Gene3D" id="1.25.40.70">
    <property type="entry name" value="Phosphatidylinositol 3-kinase, accessory domain (PIK)"/>
    <property type="match status" value="1"/>
</dbReference>
<dbReference type="InterPro" id="IPR016024">
    <property type="entry name" value="ARM-type_fold"/>
</dbReference>
<dbReference type="InterPro" id="IPR035892">
    <property type="entry name" value="C2_domain_sf"/>
</dbReference>
<dbReference type="InterPro" id="IPR011009">
    <property type="entry name" value="Kinase-like_dom_sf"/>
</dbReference>
<dbReference type="InterPro" id="IPR000403">
    <property type="entry name" value="PI3/4_kinase_cat_dom"/>
</dbReference>
<dbReference type="InterPro" id="IPR036940">
    <property type="entry name" value="PI3/4_kinase_cat_sf"/>
</dbReference>
<dbReference type="InterPro" id="IPR018936">
    <property type="entry name" value="PI3/4_kinase_CS"/>
</dbReference>
<dbReference type="InterPro" id="IPR002420">
    <property type="entry name" value="PI3K-type_C2_dom"/>
</dbReference>
<dbReference type="InterPro" id="IPR001263">
    <property type="entry name" value="PI3K_accessory_dom"/>
</dbReference>
<dbReference type="InterPro" id="IPR042236">
    <property type="entry name" value="PI3K_accessory_sf"/>
</dbReference>
<dbReference type="InterPro" id="IPR000341">
    <property type="entry name" value="PI3K_Ras-bd_dom"/>
</dbReference>
<dbReference type="InterPro" id="IPR035448">
    <property type="entry name" value="PI3Kc"/>
</dbReference>
<dbReference type="InterPro" id="IPR015433">
    <property type="entry name" value="PI_Kinase"/>
</dbReference>
<dbReference type="InterPro" id="IPR029071">
    <property type="entry name" value="Ubiquitin-like_domsf"/>
</dbReference>
<dbReference type="PANTHER" id="PTHR10048:SF48">
    <property type="entry name" value="PHOSPHATIDYLINOSITOL 3-KINASE 3"/>
    <property type="match status" value="1"/>
</dbReference>
<dbReference type="PANTHER" id="PTHR10048">
    <property type="entry name" value="PHOSPHATIDYLINOSITOL KINASE"/>
    <property type="match status" value="1"/>
</dbReference>
<dbReference type="Pfam" id="PF00454">
    <property type="entry name" value="PI3_PI4_kinase"/>
    <property type="match status" value="1"/>
</dbReference>
<dbReference type="Pfam" id="PF00792">
    <property type="entry name" value="PI3K_C2"/>
    <property type="match status" value="1"/>
</dbReference>
<dbReference type="Pfam" id="PF00794">
    <property type="entry name" value="PI3K_rbd"/>
    <property type="match status" value="1"/>
</dbReference>
<dbReference type="Pfam" id="PF00613">
    <property type="entry name" value="PI3Ka"/>
    <property type="match status" value="1"/>
</dbReference>
<dbReference type="SMART" id="SM00142">
    <property type="entry name" value="PI3K_C2"/>
    <property type="match status" value="1"/>
</dbReference>
<dbReference type="SMART" id="SM00144">
    <property type="entry name" value="PI3K_rbd"/>
    <property type="match status" value="1"/>
</dbReference>
<dbReference type="SMART" id="SM00145">
    <property type="entry name" value="PI3Ka"/>
    <property type="match status" value="1"/>
</dbReference>
<dbReference type="SMART" id="SM00146">
    <property type="entry name" value="PI3Kc"/>
    <property type="match status" value="1"/>
</dbReference>
<dbReference type="SUPFAM" id="SSF48371">
    <property type="entry name" value="ARM repeat"/>
    <property type="match status" value="1"/>
</dbReference>
<dbReference type="SUPFAM" id="SSF49562">
    <property type="entry name" value="C2 domain (Calcium/lipid-binding domain, CaLB)"/>
    <property type="match status" value="1"/>
</dbReference>
<dbReference type="SUPFAM" id="SSF56112">
    <property type="entry name" value="Protein kinase-like (PK-like)"/>
    <property type="match status" value="1"/>
</dbReference>
<dbReference type="SUPFAM" id="SSF54236">
    <property type="entry name" value="Ubiquitin-like"/>
    <property type="match status" value="1"/>
</dbReference>
<dbReference type="PROSITE" id="PS51547">
    <property type="entry name" value="C2_PI3K"/>
    <property type="match status" value="1"/>
</dbReference>
<dbReference type="PROSITE" id="PS00915">
    <property type="entry name" value="PI3_4_KINASE_1"/>
    <property type="match status" value="1"/>
</dbReference>
<dbReference type="PROSITE" id="PS00916">
    <property type="entry name" value="PI3_4_KINASE_2"/>
    <property type="match status" value="1"/>
</dbReference>
<dbReference type="PROSITE" id="PS50290">
    <property type="entry name" value="PI3_4_KINASE_3"/>
    <property type="match status" value="1"/>
</dbReference>
<dbReference type="PROSITE" id="PS51546">
    <property type="entry name" value="PI3K_RBD"/>
    <property type="match status" value="1"/>
</dbReference>
<dbReference type="PROSITE" id="PS51545">
    <property type="entry name" value="PIK_HELICAL"/>
    <property type="match status" value="1"/>
</dbReference>
<protein>
    <recommendedName>
        <fullName>Phosphatidylinositol 3-kinase 3</fullName>
        <shortName>PI3-kinase</shortName>
        <shortName>PI3K</shortName>
        <shortName>PtdIns-3-kinase</shortName>
        <ecNumber>2.7.1.137</ecNumber>
    </recommendedName>
</protein>
<comment type="catalytic activity">
    <reaction>
        <text>a 1,2-diacyl-sn-glycero-3-phospho-(1D-myo-inositol) + ATP = a 1,2-diacyl-sn-glycero-3-phospho-(1D-myo-inositol-3-phosphate) + ADP + H(+)</text>
        <dbReference type="Rhea" id="RHEA:12709"/>
        <dbReference type="ChEBI" id="CHEBI:15378"/>
        <dbReference type="ChEBI" id="CHEBI:30616"/>
        <dbReference type="ChEBI" id="CHEBI:57880"/>
        <dbReference type="ChEBI" id="CHEBI:58088"/>
        <dbReference type="ChEBI" id="CHEBI:456216"/>
        <dbReference type="EC" id="2.7.1.137"/>
    </reaction>
</comment>
<comment type="similarity">
    <text evidence="3 4">Belongs to the PI3/PI4-kinase family.</text>
</comment>